<comment type="function">
    <text evidence="1">Inhibits factor X (X(a)) directly and, in a Xa-dependent way, inhibits VIIa/tissue factor activity, presumably by forming a quaternary Xa/LACI/VIIa/TF complex. It possesses an antithrombotic action and also the ability to associate with lipoproteins in plasma (By similarity).</text>
</comment>
<comment type="subcellular location">
    <subcellularLocation>
        <location>Secreted</location>
    </subcellularLocation>
</comment>
<comment type="tissue specificity">
    <text>Most abundant in heart, lung, kidney, and aortic endothelial cells.</text>
</comment>
<comment type="domain">
    <text evidence="1">This inhibitor contains three inhibitory domains. The first domain interacts with VIIa and TF, the second one with Xa (By similarity).</text>
</comment>
<proteinExistence type="evidence at transcript level"/>
<accession>Q02445</accession>
<dbReference type="EMBL" id="D10926">
    <property type="protein sequence ID" value="BAA01724.1"/>
    <property type="molecule type" value="mRNA"/>
</dbReference>
<dbReference type="PIR" id="JX0213">
    <property type="entry name" value="TIRTGK"/>
</dbReference>
<dbReference type="RefSeq" id="NP_058896.1">
    <property type="nucleotide sequence ID" value="NM_017200.1"/>
</dbReference>
<dbReference type="RefSeq" id="XP_006234502.1">
    <property type="nucleotide sequence ID" value="XM_006234440.5"/>
</dbReference>
<dbReference type="RefSeq" id="XP_006234503.1">
    <property type="nucleotide sequence ID" value="XM_006234441.4"/>
</dbReference>
<dbReference type="RefSeq" id="XP_006234506.1">
    <property type="nucleotide sequence ID" value="XM_006234444.4"/>
</dbReference>
<dbReference type="RefSeq" id="XP_038960369.1">
    <property type="nucleotide sequence ID" value="XM_039104441.2"/>
</dbReference>
<dbReference type="RefSeq" id="XP_063139272.1">
    <property type="nucleotide sequence ID" value="XM_063283202.1"/>
</dbReference>
<dbReference type="RefSeq" id="XP_063139273.1">
    <property type="nucleotide sequence ID" value="XM_063283203.1"/>
</dbReference>
<dbReference type="SMR" id="Q02445"/>
<dbReference type="BioGRID" id="248083">
    <property type="interactions" value="1"/>
</dbReference>
<dbReference type="FunCoup" id="Q02445">
    <property type="interactions" value="360"/>
</dbReference>
<dbReference type="STRING" id="10116.ENSRNOP00000006787"/>
<dbReference type="MEROPS" id="I02.011"/>
<dbReference type="MEROPS" id="I02.012"/>
<dbReference type="MEROPS" id="I02.950"/>
<dbReference type="GlyCosmos" id="Q02445">
    <property type="glycosylation" value="3 sites, No reported glycans"/>
</dbReference>
<dbReference type="GlyGen" id="Q02445">
    <property type="glycosylation" value="3 sites"/>
</dbReference>
<dbReference type="PhosphoSitePlus" id="Q02445"/>
<dbReference type="PaxDb" id="10116-ENSRNOP00000006787"/>
<dbReference type="Ensembl" id="ENSRNOT00000100291.1">
    <property type="protein sequence ID" value="ENSRNOP00000078992.1"/>
    <property type="gene ID" value="ENSRNOG00000005039.9"/>
</dbReference>
<dbReference type="GeneID" id="29436"/>
<dbReference type="KEGG" id="rno:29436"/>
<dbReference type="UCSC" id="RGD:61914">
    <property type="organism name" value="rat"/>
</dbReference>
<dbReference type="AGR" id="RGD:61914"/>
<dbReference type="CTD" id="7035"/>
<dbReference type="RGD" id="61914">
    <property type="gene designation" value="Tfpi"/>
</dbReference>
<dbReference type="eggNOG" id="KOG4295">
    <property type="taxonomic scope" value="Eukaryota"/>
</dbReference>
<dbReference type="GeneTree" id="ENSGT00940000160767"/>
<dbReference type="HOGENOM" id="CLU_058441_2_0_1"/>
<dbReference type="InParanoid" id="Q02445"/>
<dbReference type="OMA" id="WWILCAV"/>
<dbReference type="PhylomeDB" id="Q02445"/>
<dbReference type="TreeFam" id="TF315349"/>
<dbReference type="Reactome" id="R-RNO-140834">
    <property type="pathway name" value="Extrinsic Pathway of Fibrin Clot Formation"/>
</dbReference>
<dbReference type="PRO" id="PR:Q02445"/>
<dbReference type="Proteomes" id="UP000002494">
    <property type="component" value="Chromosome 3"/>
</dbReference>
<dbReference type="Bgee" id="ENSRNOG00000005039">
    <property type="expression patterns" value="Expressed in ovary and 20 other cell types or tissues"/>
</dbReference>
<dbReference type="ExpressionAtlas" id="Q02445">
    <property type="expression patterns" value="baseline and differential"/>
</dbReference>
<dbReference type="GO" id="GO:0005901">
    <property type="term" value="C:caveola"/>
    <property type="evidence" value="ECO:0000266"/>
    <property type="project" value="RGD"/>
</dbReference>
<dbReference type="GO" id="GO:0009986">
    <property type="term" value="C:cell surface"/>
    <property type="evidence" value="ECO:0000266"/>
    <property type="project" value="RGD"/>
</dbReference>
<dbReference type="GO" id="GO:0005615">
    <property type="term" value="C:extracellular space"/>
    <property type="evidence" value="ECO:0000314"/>
    <property type="project" value="RGD"/>
</dbReference>
<dbReference type="GO" id="GO:0004867">
    <property type="term" value="F:serine-type endopeptidase inhibitor activity"/>
    <property type="evidence" value="ECO:0000318"/>
    <property type="project" value="GO_Central"/>
</dbReference>
<dbReference type="GO" id="GO:0007596">
    <property type="term" value="P:blood coagulation"/>
    <property type="evidence" value="ECO:0007669"/>
    <property type="project" value="UniProtKB-KW"/>
</dbReference>
<dbReference type="GO" id="GO:0071347">
    <property type="term" value="P:cellular response to interleukin-1"/>
    <property type="evidence" value="ECO:0000270"/>
    <property type="project" value="RGD"/>
</dbReference>
<dbReference type="GO" id="GO:0071222">
    <property type="term" value="P:cellular response to lipopolysaccharide"/>
    <property type="evidence" value="ECO:0000270"/>
    <property type="project" value="RGD"/>
</dbReference>
<dbReference type="GO" id="GO:0071383">
    <property type="term" value="P:cellular response to steroid hormone stimulus"/>
    <property type="evidence" value="ECO:0000266"/>
    <property type="project" value="RGD"/>
</dbReference>
<dbReference type="GO" id="GO:0030195">
    <property type="term" value="P:negative regulation of blood coagulation"/>
    <property type="evidence" value="ECO:0000266"/>
    <property type="project" value="RGD"/>
</dbReference>
<dbReference type="GO" id="GO:0032355">
    <property type="term" value="P:response to estradiol"/>
    <property type="evidence" value="ECO:0000270"/>
    <property type="project" value="RGD"/>
</dbReference>
<dbReference type="GO" id="GO:0032496">
    <property type="term" value="P:response to lipopolysaccharide"/>
    <property type="evidence" value="ECO:0000270"/>
    <property type="project" value="RGD"/>
</dbReference>
<dbReference type="CDD" id="cd22613">
    <property type="entry name" value="Kunitz_TFPI1_1-like"/>
    <property type="match status" value="1"/>
</dbReference>
<dbReference type="CDD" id="cd22614">
    <property type="entry name" value="Kunitz_TFPI1_2-like"/>
    <property type="match status" value="1"/>
</dbReference>
<dbReference type="CDD" id="cd22615">
    <property type="entry name" value="Kunitz_TFPI1_TFPI2_3-like"/>
    <property type="match status" value="1"/>
</dbReference>
<dbReference type="FunFam" id="4.10.410.10:FF:000004">
    <property type="entry name" value="Tissue factor pathway inhibitor"/>
    <property type="match status" value="1"/>
</dbReference>
<dbReference type="FunFam" id="4.10.410.10:FF:000012">
    <property type="entry name" value="Tissue factor pathway inhibitor"/>
    <property type="match status" value="1"/>
</dbReference>
<dbReference type="FunFam" id="4.10.410.10:FF:000013">
    <property type="entry name" value="Tissue factor pathway inhibitor"/>
    <property type="match status" value="1"/>
</dbReference>
<dbReference type="Gene3D" id="4.10.410.10">
    <property type="entry name" value="Pancreatic trypsin inhibitor Kunitz domain"/>
    <property type="match status" value="3"/>
</dbReference>
<dbReference type="InterPro" id="IPR002223">
    <property type="entry name" value="Kunitz_BPTI"/>
</dbReference>
<dbReference type="InterPro" id="IPR036880">
    <property type="entry name" value="Kunitz_BPTI_sf"/>
</dbReference>
<dbReference type="InterPro" id="IPR020901">
    <property type="entry name" value="Prtase_inh_Kunz-CS"/>
</dbReference>
<dbReference type="InterPro" id="IPR008296">
    <property type="entry name" value="TFPI-like"/>
</dbReference>
<dbReference type="InterPro" id="IPR050098">
    <property type="entry name" value="TFPI/VKTCI-like"/>
</dbReference>
<dbReference type="PANTHER" id="PTHR10083">
    <property type="entry name" value="KUNITZ-TYPE PROTEASE INHIBITOR-RELATED"/>
    <property type="match status" value="1"/>
</dbReference>
<dbReference type="PANTHER" id="PTHR10083:SF328">
    <property type="entry name" value="TISSUE FACTOR PATHWAY INHIBITOR"/>
    <property type="match status" value="1"/>
</dbReference>
<dbReference type="Pfam" id="PF00014">
    <property type="entry name" value="Kunitz_BPTI"/>
    <property type="match status" value="3"/>
</dbReference>
<dbReference type="PIRSF" id="PIRSF001620">
    <property type="entry name" value="TFPI"/>
    <property type="match status" value="1"/>
</dbReference>
<dbReference type="PRINTS" id="PR00759">
    <property type="entry name" value="BASICPTASE"/>
</dbReference>
<dbReference type="SMART" id="SM00131">
    <property type="entry name" value="KU"/>
    <property type="match status" value="3"/>
</dbReference>
<dbReference type="SUPFAM" id="SSF57362">
    <property type="entry name" value="BPTI-like"/>
    <property type="match status" value="3"/>
</dbReference>
<dbReference type="PROSITE" id="PS00280">
    <property type="entry name" value="BPTI_KUNITZ_1"/>
    <property type="match status" value="3"/>
</dbReference>
<dbReference type="PROSITE" id="PS50279">
    <property type="entry name" value="BPTI_KUNITZ_2"/>
    <property type="match status" value="3"/>
</dbReference>
<gene>
    <name type="primary">Tfpi</name>
</gene>
<keyword id="KW-0094">Blood coagulation</keyword>
<keyword id="KW-1015">Disulfide bond</keyword>
<keyword id="KW-0325">Glycoprotein</keyword>
<keyword id="KW-0356">Hemostasis</keyword>
<keyword id="KW-0646">Protease inhibitor</keyword>
<keyword id="KW-1185">Reference proteome</keyword>
<keyword id="KW-0677">Repeat</keyword>
<keyword id="KW-0964">Secreted</keyword>
<keyword id="KW-0722">Serine protease inhibitor</keyword>
<keyword id="KW-0732">Signal</keyword>
<protein>
    <recommendedName>
        <fullName>Tissue factor pathway inhibitor</fullName>
        <shortName>TFPI</shortName>
    </recommendedName>
    <alternativeName>
        <fullName>Extrinsic pathway inhibitor</fullName>
        <shortName>EPI</shortName>
    </alternativeName>
    <alternativeName>
        <fullName>Lipoprotein-associated coagulation inhibitor</fullName>
        <shortName>LACI</shortName>
    </alternativeName>
</protein>
<evidence type="ECO:0000250" key="1"/>
<evidence type="ECO:0000255" key="2"/>
<evidence type="ECO:0000255" key="3">
    <source>
        <dbReference type="PROSITE-ProRule" id="PRU00031"/>
    </source>
</evidence>
<reference key="1">
    <citation type="journal article" date="1992" name="J. Biochem.">
        <title>cDNA cloning and expression of rat tissue factor pathway inhibitor (TFPI).</title>
        <authorList>
            <person name="Enjyoji K."/>
            <person name="Emi M."/>
            <person name="Mukai T."/>
            <person name="Kato H."/>
        </authorList>
    </citation>
    <scope>NUCLEOTIDE SEQUENCE [MRNA]</scope>
    <source>
        <strain>Sprague-Dawley</strain>
        <tissue>Liver</tissue>
    </source>
</reference>
<sequence>MTNKLKKDHAFWAAVCLLLSIVPELLNALPEEDDDTINTDSELRPMKPLHTFCAMKAEDGPCKAMIRSYYFNMNSHQCEEFIYGGCRGNKNRFDTLEECRKTCIPGYKKTTIKTTSGAEKPDFCFLEEDPGICRGFMTRYFYNNQSKQCEQFKYGGCLGNSNNFETLEECRNTCEDPVNEVQKGDYVTNQITVTDRTTVNNVVIPQATKAPSQWDYDGPSWCLEPADSGLCKASEKRFYYNPAIGKCRQFNYTGCGGNNNNFTTKQDCNRACKKDSSKKSSKRAKTQRRRKSFVKVMYENIH</sequence>
<feature type="signal peptide">
    <location>
        <begin position="1"/>
        <end position="28"/>
    </location>
</feature>
<feature type="chain" id="PRO_0000016875" description="Tissue factor pathway inhibitor">
    <location>
        <begin position="29"/>
        <end position="302"/>
    </location>
</feature>
<feature type="domain" description="BPTI/Kunitz inhibitor 1" evidence="3">
    <location>
        <begin position="53"/>
        <end position="103"/>
    </location>
</feature>
<feature type="domain" description="BPTI/Kunitz inhibitor 2" evidence="3">
    <location>
        <begin position="124"/>
        <end position="174"/>
    </location>
</feature>
<feature type="domain" description="BPTI/Kunitz inhibitor 3" evidence="3">
    <location>
        <begin position="222"/>
        <end position="272"/>
    </location>
</feature>
<feature type="site" description="Reactive bond" evidence="1">
    <location>
        <begin position="63"/>
        <end position="64"/>
    </location>
</feature>
<feature type="site" description="Reactive bond" evidence="1">
    <location>
        <begin position="134"/>
        <end position="135"/>
    </location>
</feature>
<feature type="site" description="Reactive bond" evidence="1">
    <location>
        <begin position="232"/>
        <end position="233"/>
    </location>
</feature>
<feature type="glycosylation site" description="N-linked (GlcNAc...) asparagine" evidence="2">
    <location>
        <position position="144"/>
    </location>
</feature>
<feature type="glycosylation site" description="N-linked (GlcNAc...) asparagine" evidence="2">
    <location>
        <position position="251"/>
    </location>
</feature>
<feature type="glycosylation site" description="N-linked (GlcNAc...) asparagine" evidence="2">
    <location>
        <position position="261"/>
    </location>
</feature>
<feature type="disulfide bond" evidence="3">
    <location>
        <begin position="53"/>
        <end position="103"/>
    </location>
</feature>
<feature type="disulfide bond" evidence="3">
    <location>
        <begin position="62"/>
        <end position="86"/>
    </location>
</feature>
<feature type="disulfide bond" evidence="3">
    <location>
        <begin position="78"/>
        <end position="99"/>
    </location>
</feature>
<feature type="disulfide bond" evidence="3">
    <location>
        <begin position="124"/>
        <end position="174"/>
    </location>
</feature>
<feature type="disulfide bond" evidence="3">
    <location>
        <begin position="133"/>
        <end position="157"/>
    </location>
</feature>
<feature type="disulfide bond" evidence="3">
    <location>
        <begin position="149"/>
        <end position="170"/>
    </location>
</feature>
<feature type="disulfide bond" evidence="3">
    <location>
        <begin position="222"/>
        <end position="272"/>
    </location>
</feature>
<feature type="disulfide bond" evidence="3">
    <location>
        <begin position="231"/>
        <end position="255"/>
    </location>
</feature>
<feature type="disulfide bond" evidence="3">
    <location>
        <begin position="247"/>
        <end position="268"/>
    </location>
</feature>
<organism>
    <name type="scientific">Rattus norvegicus</name>
    <name type="common">Rat</name>
    <dbReference type="NCBI Taxonomy" id="10116"/>
    <lineage>
        <taxon>Eukaryota</taxon>
        <taxon>Metazoa</taxon>
        <taxon>Chordata</taxon>
        <taxon>Craniata</taxon>
        <taxon>Vertebrata</taxon>
        <taxon>Euteleostomi</taxon>
        <taxon>Mammalia</taxon>
        <taxon>Eutheria</taxon>
        <taxon>Euarchontoglires</taxon>
        <taxon>Glires</taxon>
        <taxon>Rodentia</taxon>
        <taxon>Myomorpha</taxon>
        <taxon>Muroidea</taxon>
        <taxon>Muridae</taxon>
        <taxon>Murinae</taxon>
        <taxon>Rattus</taxon>
    </lineage>
</organism>
<name>TFPI1_RAT</name>